<feature type="chain" id="PRO_0000185268" description="Probable succinyl-diaminopimelate desuccinylase">
    <location>
        <begin position="1"/>
        <end position="407"/>
    </location>
</feature>
<feature type="active site" evidence="1">
    <location>
        <position position="74"/>
    </location>
</feature>
<feature type="active site" description="Proton acceptor" evidence="1">
    <location>
        <position position="139"/>
    </location>
</feature>
<feature type="binding site" evidence="1">
    <location>
        <position position="72"/>
    </location>
    <ligand>
        <name>Zn(2+)</name>
        <dbReference type="ChEBI" id="CHEBI:29105"/>
        <label>1</label>
    </ligand>
</feature>
<feature type="binding site" evidence="1">
    <location>
        <position position="105"/>
    </location>
    <ligand>
        <name>Zn(2+)</name>
        <dbReference type="ChEBI" id="CHEBI:29105"/>
        <label>1</label>
    </ligand>
</feature>
<feature type="binding site" evidence="1">
    <location>
        <position position="105"/>
    </location>
    <ligand>
        <name>Zn(2+)</name>
        <dbReference type="ChEBI" id="CHEBI:29105"/>
        <label>2</label>
    </ligand>
</feature>
<feature type="binding site" evidence="1">
    <location>
        <position position="140"/>
    </location>
    <ligand>
        <name>Zn(2+)</name>
        <dbReference type="ChEBI" id="CHEBI:29105"/>
        <label>2</label>
    </ligand>
</feature>
<feature type="binding site" evidence="1">
    <location>
        <position position="165"/>
    </location>
    <ligand>
        <name>Zn(2+)</name>
        <dbReference type="ChEBI" id="CHEBI:29105"/>
        <label>1</label>
    </ligand>
</feature>
<feature type="binding site" evidence="1">
    <location>
        <position position="378"/>
    </location>
    <ligand>
        <name>Zn(2+)</name>
        <dbReference type="ChEBI" id="CHEBI:29105"/>
        <label>2</label>
    </ligand>
</feature>
<organism>
    <name type="scientific">Staphylococcus aureus (strain MW2)</name>
    <dbReference type="NCBI Taxonomy" id="196620"/>
    <lineage>
        <taxon>Bacteria</taxon>
        <taxon>Bacillati</taxon>
        <taxon>Bacillota</taxon>
        <taxon>Bacilli</taxon>
        <taxon>Bacillales</taxon>
        <taxon>Staphylococcaceae</taxon>
        <taxon>Staphylococcus</taxon>
    </lineage>
</organism>
<proteinExistence type="inferred from homology"/>
<comment type="catalytic activity">
    <reaction>
        <text>N-succinyl-(2S,6S)-2,6-diaminopimelate + H2O = (2S,6S)-2,6-diaminopimelate + succinate</text>
        <dbReference type="Rhea" id="RHEA:22608"/>
        <dbReference type="ChEBI" id="CHEBI:15377"/>
        <dbReference type="ChEBI" id="CHEBI:30031"/>
        <dbReference type="ChEBI" id="CHEBI:57609"/>
        <dbReference type="ChEBI" id="CHEBI:58087"/>
        <dbReference type="EC" id="3.5.1.18"/>
    </reaction>
</comment>
<comment type="cofactor">
    <cofactor evidence="1">
        <name>Zn(2+)</name>
        <dbReference type="ChEBI" id="CHEBI:29105"/>
    </cofactor>
    <cofactor evidence="1">
        <name>Co(2+)</name>
        <dbReference type="ChEBI" id="CHEBI:48828"/>
    </cofactor>
    <text evidence="1">Binds 2 Zn(2+) or Co(2+) ions per subunit.</text>
</comment>
<comment type="pathway">
    <text>Amino-acid biosynthesis; L-lysine biosynthesis via DAP pathway; LL-2,6-diaminopimelate from (S)-tetrahydrodipicolinate (succinylase route): step 3/3.</text>
</comment>
<comment type="similarity">
    <text evidence="2">Belongs to the peptidase M20A family.</text>
</comment>
<protein>
    <recommendedName>
        <fullName>Probable succinyl-diaminopimelate desuccinylase</fullName>
        <shortName>SDAP desuccinylase</shortName>
        <ecNumber>3.5.1.18</ecNumber>
    </recommendedName>
</protein>
<gene>
    <name type="primary">dapE</name>
    <name type="ordered locus">MW1943</name>
</gene>
<evidence type="ECO:0000250" key="1"/>
<evidence type="ECO:0000305" key="2"/>
<name>DAPE_STAAW</name>
<accession>Q8NVL7</accession>
<reference key="1">
    <citation type="journal article" date="2002" name="Lancet">
        <title>Genome and virulence determinants of high virulence community-acquired MRSA.</title>
        <authorList>
            <person name="Baba T."/>
            <person name="Takeuchi F."/>
            <person name="Kuroda M."/>
            <person name="Yuzawa H."/>
            <person name="Aoki K."/>
            <person name="Oguchi A."/>
            <person name="Nagai Y."/>
            <person name="Iwama N."/>
            <person name="Asano K."/>
            <person name="Naimi T."/>
            <person name="Kuroda H."/>
            <person name="Cui L."/>
            <person name="Yamamoto K."/>
            <person name="Hiramatsu K."/>
        </authorList>
    </citation>
    <scope>NUCLEOTIDE SEQUENCE [LARGE SCALE GENOMIC DNA]</scope>
    <source>
        <strain>MW2</strain>
    </source>
</reference>
<dbReference type="EC" id="3.5.1.18"/>
<dbReference type="EMBL" id="BA000033">
    <property type="protein sequence ID" value="BAB95808.1"/>
    <property type="molecule type" value="Genomic_DNA"/>
</dbReference>
<dbReference type="RefSeq" id="WP_000206623.1">
    <property type="nucleotide sequence ID" value="NC_003923.1"/>
</dbReference>
<dbReference type="SMR" id="Q8NVL7"/>
<dbReference type="KEGG" id="sam:MW1943"/>
<dbReference type="HOGENOM" id="CLU_021802_2_2_9"/>
<dbReference type="UniPathway" id="UPA00034">
    <property type="reaction ID" value="UER00021"/>
</dbReference>
<dbReference type="GO" id="GO:0046872">
    <property type="term" value="F:metal ion binding"/>
    <property type="evidence" value="ECO:0007669"/>
    <property type="project" value="UniProtKB-KW"/>
</dbReference>
<dbReference type="GO" id="GO:0009014">
    <property type="term" value="F:succinyl-diaminopimelate desuccinylase activity"/>
    <property type="evidence" value="ECO:0007669"/>
    <property type="project" value="UniProtKB-EC"/>
</dbReference>
<dbReference type="GO" id="GO:0019877">
    <property type="term" value="P:diaminopimelate biosynthetic process"/>
    <property type="evidence" value="ECO:0007669"/>
    <property type="project" value="UniProtKB-KW"/>
</dbReference>
<dbReference type="GO" id="GO:0009089">
    <property type="term" value="P:lysine biosynthetic process via diaminopimelate"/>
    <property type="evidence" value="ECO:0007669"/>
    <property type="project" value="UniProtKB-UniPathway"/>
</dbReference>
<dbReference type="CDD" id="cd08659">
    <property type="entry name" value="M20_ArgE_DapE-like"/>
    <property type="match status" value="1"/>
</dbReference>
<dbReference type="Gene3D" id="3.30.70.360">
    <property type="match status" value="1"/>
</dbReference>
<dbReference type="Gene3D" id="3.40.630.10">
    <property type="entry name" value="Zn peptidases"/>
    <property type="match status" value="2"/>
</dbReference>
<dbReference type="InterPro" id="IPR010182">
    <property type="entry name" value="ArgE/DapE"/>
</dbReference>
<dbReference type="InterPro" id="IPR001261">
    <property type="entry name" value="ArgE/DapE_CS"/>
</dbReference>
<dbReference type="InterPro" id="IPR036264">
    <property type="entry name" value="Bact_exopeptidase_dim_dom"/>
</dbReference>
<dbReference type="InterPro" id="IPR002933">
    <property type="entry name" value="Peptidase_M20"/>
</dbReference>
<dbReference type="InterPro" id="IPR011650">
    <property type="entry name" value="Peptidase_M20_dimer"/>
</dbReference>
<dbReference type="InterPro" id="IPR050072">
    <property type="entry name" value="Peptidase_M20A"/>
</dbReference>
<dbReference type="NCBIfam" id="TIGR01910">
    <property type="entry name" value="DapE-ArgE"/>
    <property type="match status" value="1"/>
</dbReference>
<dbReference type="NCBIfam" id="NF006365">
    <property type="entry name" value="PRK08588.1"/>
    <property type="match status" value="1"/>
</dbReference>
<dbReference type="PANTHER" id="PTHR43808">
    <property type="entry name" value="ACETYLORNITHINE DEACETYLASE"/>
    <property type="match status" value="1"/>
</dbReference>
<dbReference type="PANTHER" id="PTHR43808:SF8">
    <property type="entry name" value="PEPTIDASE M20 DIMERISATION DOMAIN-CONTAINING PROTEIN"/>
    <property type="match status" value="1"/>
</dbReference>
<dbReference type="Pfam" id="PF07687">
    <property type="entry name" value="M20_dimer"/>
    <property type="match status" value="1"/>
</dbReference>
<dbReference type="Pfam" id="PF01546">
    <property type="entry name" value="Peptidase_M20"/>
    <property type="match status" value="1"/>
</dbReference>
<dbReference type="SUPFAM" id="SSF55031">
    <property type="entry name" value="Bacterial exopeptidase dimerisation domain"/>
    <property type="match status" value="1"/>
</dbReference>
<dbReference type="SUPFAM" id="SSF53187">
    <property type="entry name" value="Zn-dependent exopeptidases"/>
    <property type="match status" value="1"/>
</dbReference>
<dbReference type="PROSITE" id="PS00758">
    <property type="entry name" value="ARGE_DAPE_CPG2_1"/>
    <property type="match status" value="1"/>
</dbReference>
<dbReference type="PROSITE" id="PS00759">
    <property type="entry name" value="ARGE_DAPE_CPG2_2"/>
    <property type="match status" value="1"/>
</dbReference>
<sequence>MTTFSEKEKIQLLADIVELQTENNNEIDVCNYLKDLFDKYDIKSEILKVNEHRANIVAEIGNGSPILALSGHMDVVDAGNQDNWTYPPFQLTEKAGKLYGRGTTDMKGGLMALVITLIELKEQNQLPQGTIRLLATAGEEKEQEGAKLLADKGYLDDVDGLIIAEPTGSGIYYAHKGSMSCKVTATGKAVHSSVPFIGDNAIDTLLEFYNLFKEKYSELKQQDTKHELDVAPMFKSLIGKEISEEDANYASGLTAVCSIINGGKQFNSVPDEASLEFNVRPVPEYDNDFIESFFQNIINDVDSNKLSLDIPSNHRPVTSDKNSKLITTIKDVASSYVEQDEIFVSALVGATDASSFLGDNKDNVDLAIFGPGNPLMAHQIDEYIEKDMYLKYIDIFKEASIKYLKEK</sequence>
<keyword id="KW-0028">Amino-acid biosynthesis</keyword>
<keyword id="KW-0170">Cobalt</keyword>
<keyword id="KW-0220">Diaminopimelate biosynthesis</keyword>
<keyword id="KW-0378">Hydrolase</keyword>
<keyword id="KW-0457">Lysine biosynthesis</keyword>
<keyword id="KW-0479">Metal-binding</keyword>
<keyword id="KW-0862">Zinc</keyword>